<proteinExistence type="inferred from homology"/>
<protein>
    <recommendedName>
        <fullName>NADH-ubiquinone oxidoreductase chain 4</fullName>
        <ecNumber>7.1.1.2</ecNumber>
    </recommendedName>
    <alternativeName>
        <fullName>NADH dehydrogenase subunit 4</fullName>
    </alternativeName>
</protein>
<keyword id="KW-0249">Electron transport</keyword>
<keyword id="KW-0472">Membrane</keyword>
<keyword id="KW-0496">Mitochondrion</keyword>
<keyword id="KW-0520">NAD</keyword>
<keyword id="KW-0679">Respiratory chain</keyword>
<keyword id="KW-1278">Translocase</keyword>
<keyword id="KW-0812">Transmembrane</keyword>
<keyword id="KW-1133">Transmembrane helix</keyword>
<keyword id="KW-0813">Transport</keyword>
<keyword id="KW-0830">Ubiquinone</keyword>
<geneLocation type="mitochondrion"/>
<name>NU4M_BOTBI</name>
<accession>O03698</accession>
<organism>
    <name type="scientific">Bothrops bilineatus</name>
    <name type="common">Green jararaca</name>
    <name type="synonym">Bothriopsis bilineata</name>
    <dbReference type="NCBI Taxonomy" id="44724"/>
    <lineage>
        <taxon>Eukaryota</taxon>
        <taxon>Metazoa</taxon>
        <taxon>Chordata</taxon>
        <taxon>Craniata</taxon>
        <taxon>Vertebrata</taxon>
        <taxon>Euteleostomi</taxon>
        <taxon>Lepidosauria</taxon>
        <taxon>Squamata</taxon>
        <taxon>Bifurcata</taxon>
        <taxon>Unidentata</taxon>
        <taxon>Episquamata</taxon>
        <taxon>Toxicofera</taxon>
        <taxon>Serpentes</taxon>
        <taxon>Colubroidea</taxon>
        <taxon>Viperidae</taxon>
        <taxon>Crotalinae</taxon>
        <taxon>Bothrops</taxon>
    </lineage>
</organism>
<dbReference type="EC" id="7.1.1.2"/>
<dbReference type="EMBL" id="U41875">
    <property type="protein sequence ID" value="AAB46633.1"/>
    <property type="molecule type" value="Genomic_DNA"/>
</dbReference>
<dbReference type="SMR" id="O03698"/>
<dbReference type="GO" id="GO:0031966">
    <property type="term" value="C:mitochondrial membrane"/>
    <property type="evidence" value="ECO:0007669"/>
    <property type="project" value="UniProtKB-SubCell"/>
</dbReference>
<dbReference type="GO" id="GO:0008137">
    <property type="term" value="F:NADH dehydrogenase (ubiquinone) activity"/>
    <property type="evidence" value="ECO:0007669"/>
    <property type="project" value="UniProtKB-EC"/>
</dbReference>
<dbReference type="GO" id="GO:0048039">
    <property type="term" value="F:ubiquinone binding"/>
    <property type="evidence" value="ECO:0007669"/>
    <property type="project" value="TreeGrafter"/>
</dbReference>
<dbReference type="GO" id="GO:0042773">
    <property type="term" value="P:ATP synthesis coupled electron transport"/>
    <property type="evidence" value="ECO:0007669"/>
    <property type="project" value="InterPro"/>
</dbReference>
<dbReference type="GO" id="GO:0015990">
    <property type="term" value="P:electron transport coupled proton transport"/>
    <property type="evidence" value="ECO:0007669"/>
    <property type="project" value="TreeGrafter"/>
</dbReference>
<dbReference type="InterPro" id="IPR003918">
    <property type="entry name" value="NADH_UbQ_OxRdtase"/>
</dbReference>
<dbReference type="InterPro" id="IPR001750">
    <property type="entry name" value="ND/Mrp_TM"/>
</dbReference>
<dbReference type="PANTHER" id="PTHR43507">
    <property type="entry name" value="NADH-UBIQUINONE OXIDOREDUCTASE CHAIN 4"/>
    <property type="match status" value="1"/>
</dbReference>
<dbReference type="PANTHER" id="PTHR43507:SF20">
    <property type="entry name" value="NADH-UBIQUINONE OXIDOREDUCTASE CHAIN 4"/>
    <property type="match status" value="1"/>
</dbReference>
<dbReference type="Pfam" id="PF00361">
    <property type="entry name" value="Proton_antipo_M"/>
    <property type="match status" value="1"/>
</dbReference>
<reference key="1">
    <citation type="journal article" date="1996" name="Copeia">
        <title>Crotaline intergeneric relationships based on mitochondrial DNA sequence data.</title>
        <authorList>
            <person name="Kraus F."/>
            <person name="Mink D.G."/>
            <person name="Brown W.M."/>
        </authorList>
    </citation>
    <scope>NUCLEOTIDE SEQUENCE [GENOMIC DNA]</scope>
</reference>
<feature type="chain" id="PRO_0000117902" description="NADH-ubiquinone oxidoreductase chain 4">
    <location>
        <begin position="1" status="less than"/>
        <end position="231" status="greater than"/>
    </location>
</feature>
<feature type="transmembrane region" description="Helical" evidence="2">
    <location>
        <begin position="1"/>
        <end position="21"/>
    </location>
</feature>
<feature type="transmembrane region" description="Helical" evidence="2">
    <location>
        <begin position="34"/>
        <end position="54"/>
    </location>
</feature>
<feature type="transmembrane region" description="Helical" evidence="2">
    <location>
        <begin position="63"/>
        <end position="85"/>
    </location>
</feature>
<feature type="transmembrane region" description="Helical" evidence="2">
    <location>
        <begin position="89"/>
        <end position="111"/>
    </location>
</feature>
<feature type="transmembrane region" description="Helical" evidence="2">
    <location>
        <begin position="128"/>
        <end position="148"/>
    </location>
</feature>
<feature type="transmembrane region" description="Helical" evidence="2">
    <location>
        <begin position="169"/>
        <end position="189"/>
    </location>
</feature>
<feature type="non-terminal residue">
    <location>
        <position position="1"/>
    </location>
</feature>
<feature type="non-terminal residue">
    <location>
        <position position="231"/>
    </location>
</feature>
<sequence length="231" mass="25350">PIAGSMVLAAILLKLGGYGIIRMMQVLPTTKTDMFLPFIVLALWGAVLANLTCLQQTDLKSLIAYSSISHMGLVVATIIIQTPWGLSGAMALMIAHGFTSSALFCLANTTYERTHTRILILTRGFHNILPMATTWWLLANLMNIAIPPTMNFTGELLISSSLFNWCPTTIILLGLSMLITACYSLHMLLSTQMGPTPLNSQTEPTHSREHLLMVLHLAPLMMISMKPELII</sequence>
<evidence type="ECO:0000250" key="1"/>
<evidence type="ECO:0000255" key="2"/>
<evidence type="ECO:0000305" key="3"/>
<comment type="function">
    <text evidence="1">Core subunit of the mitochondrial membrane respiratory chain NADH dehydrogenase (Complex I) that is believed to belong to the minimal assembly required for catalysis. Complex I functions in the transfer of electrons from NADH to the respiratory chain. The immediate electron acceptor for the enzyme is believed to be ubiquinone (By similarity).</text>
</comment>
<comment type="catalytic activity">
    <reaction>
        <text>a ubiquinone + NADH + 5 H(+)(in) = a ubiquinol + NAD(+) + 4 H(+)(out)</text>
        <dbReference type="Rhea" id="RHEA:29091"/>
        <dbReference type="Rhea" id="RHEA-COMP:9565"/>
        <dbReference type="Rhea" id="RHEA-COMP:9566"/>
        <dbReference type="ChEBI" id="CHEBI:15378"/>
        <dbReference type="ChEBI" id="CHEBI:16389"/>
        <dbReference type="ChEBI" id="CHEBI:17976"/>
        <dbReference type="ChEBI" id="CHEBI:57540"/>
        <dbReference type="ChEBI" id="CHEBI:57945"/>
        <dbReference type="EC" id="7.1.1.2"/>
    </reaction>
</comment>
<comment type="subcellular location">
    <subcellularLocation>
        <location evidence="1">Mitochondrion membrane</location>
        <topology evidence="1">Multi-pass membrane protein</topology>
    </subcellularLocation>
</comment>
<comment type="similarity">
    <text evidence="3">Belongs to the complex I subunit 4 family.</text>
</comment>
<gene>
    <name type="primary">MT-ND4</name>
    <name type="synonym">MTND4</name>
    <name type="synonym">NADH4</name>
    <name type="synonym">ND4</name>
</gene>